<feature type="chain" id="PRO_0000179499" description="ATP-dependent Clp protease proteolytic subunit 1">
    <location>
        <begin position="1"/>
        <end position="193"/>
    </location>
</feature>
<feature type="active site" description="Nucleophile" evidence="1">
    <location>
        <position position="99"/>
    </location>
</feature>
<feature type="active site" evidence="1">
    <location>
        <position position="124"/>
    </location>
</feature>
<evidence type="ECO:0000255" key="1">
    <source>
        <dbReference type="HAMAP-Rule" id="MF_00444"/>
    </source>
</evidence>
<sequence length="193" mass="21309">MNIPIPYVMEQTRYGERSYDIYSRLLKDRIIFIGDEITDTLANSVTAQLLFLASTDPEKDISIYINSPGGSVSAGFAILDTMLYIKPDIQTICTGMAASFAAVLLVGGTKGKRCALPHAEVMIHQPHGGMKGQASDMDIYAQRILKQRKEINHFIAERTGQTPDKIATDSERDYFMSAAEAKDYGVIDNILPV</sequence>
<proteinExistence type="inferred from homology"/>
<gene>
    <name evidence="1" type="primary">clpP1</name>
    <name type="ordered locus">ABC0035</name>
</gene>
<reference key="1">
    <citation type="submission" date="2003-10" db="EMBL/GenBank/DDBJ databases">
        <title>The complete genome sequence of the alkaliphilic Bacillus clausii KSM-K16.</title>
        <authorList>
            <person name="Takaki Y."/>
            <person name="Kageyama Y."/>
            <person name="Shimamura S."/>
            <person name="Suzuki H."/>
            <person name="Nishi S."/>
            <person name="Hatada Y."/>
            <person name="Kawai S."/>
            <person name="Ito S."/>
            <person name="Horikoshi K."/>
        </authorList>
    </citation>
    <scope>NUCLEOTIDE SEQUENCE [LARGE SCALE GENOMIC DNA]</scope>
    <source>
        <strain>KSM-K16</strain>
    </source>
</reference>
<protein>
    <recommendedName>
        <fullName evidence="1">ATP-dependent Clp protease proteolytic subunit 1</fullName>
        <ecNumber evidence="1">3.4.21.92</ecNumber>
    </recommendedName>
    <alternativeName>
        <fullName evidence="1">Endopeptidase Clp 1</fullName>
    </alternativeName>
</protein>
<keyword id="KW-0963">Cytoplasm</keyword>
<keyword id="KW-0378">Hydrolase</keyword>
<keyword id="KW-0645">Protease</keyword>
<keyword id="KW-1185">Reference proteome</keyword>
<keyword id="KW-0720">Serine protease</keyword>
<dbReference type="EC" id="3.4.21.92" evidence="1"/>
<dbReference type="EMBL" id="AP006627">
    <property type="protein sequence ID" value="BAD62578.1"/>
    <property type="molecule type" value="Genomic_DNA"/>
</dbReference>
<dbReference type="RefSeq" id="WP_011244899.1">
    <property type="nucleotide sequence ID" value="NC_006582.1"/>
</dbReference>
<dbReference type="SMR" id="Q5WLZ7"/>
<dbReference type="STRING" id="66692.ABC0035"/>
<dbReference type="MEROPS" id="S14.001"/>
<dbReference type="KEGG" id="bcl:ABC0035"/>
<dbReference type="eggNOG" id="COG0740">
    <property type="taxonomic scope" value="Bacteria"/>
</dbReference>
<dbReference type="HOGENOM" id="CLU_058707_3_2_9"/>
<dbReference type="OrthoDB" id="9802800at2"/>
<dbReference type="Proteomes" id="UP000001168">
    <property type="component" value="Chromosome"/>
</dbReference>
<dbReference type="GO" id="GO:0005737">
    <property type="term" value="C:cytoplasm"/>
    <property type="evidence" value="ECO:0007669"/>
    <property type="project" value="UniProtKB-SubCell"/>
</dbReference>
<dbReference type="GO" id="GO:0009368">
    <property type="term" value="C:endopeptidase Clp complex"/>
    <property type="evidence" value="ECO:0007669"/>
    <property type="project" value="TreeGrafter"/>
</dbReference>
<dbReference type="GO" id="GO:0004176">
    <property type="term" value="F:ATP-dependent peptidase activity"/>
    <property type="evidence" value="ECO:0007669"/>
    <property type="project" value="InterPro"/>
</dbReference>
<dbReference type="GO" id="GO:0051117">
    <property type="term" value="F:ATPase binding"/>
    <property type="evidence" value="ECO:0007669"/>
    <property type="project" value="TreeGrafter"/>
</dbReference>
<dbReference type="GO" id="GO:0004252">
    <property type="term" value="F:serine-type endopeptidase activity"/>
    <property type="evidence" value="ECO:0007669"/>
    <property type="project" value="UniProtKB-UniRule"/>
</dbReference>
<dbReference type="GO" id="GO:0006515">
    <property type="term" value="P:protein quality control for misfolded or incompletely synthesized proteins"/>
    <property type="evidence" value="ECO:0007669"/>
    <property type="project" value="TreeGrafter"/>
</dbReference>
<dbReference type="CDD" id="cd07017">
    <property type="entry name" value="S14_ClpP_2"/>
    <property type="match status" value="1"/>
</dbReference>
<dbReference type="FunFam" id="3.90.226.10:FF:000001">
    <property type="entry name" value="ATP-dependent Clp protease proteolytic subunit"/>
    <property type="match status" value="1"/>
</dbReference>
<dbReference type="Gene3D" id="3.90.226.10">
    <property type="entry name" value="2-enoyl-CoA Hydratase, Chain A, domain 1"/>
    <property type="match status" value="1"/>
</dbReference>
<dbReference type="HAMAP" id="MF_00444">
    <property type="entry name" value="ClpP"/>
    <property type="match status" value="1"/>
</dbReference>
<dbReference type="InterPro" id="IPR001907">
    <property type="entry name" value="ClpP"/>
</dbReference>
<dbReference type="InterPro" id="IPR029045">
    <property type="entry name" value="ClpP/crotonase-like_dom_sf"/>
</dbReference>
<dbReference type="InterPro" id="IPR023562">
    <property type="entry name" value="ClpP/TepA"/>
</dbReference>
<dbReference type="InterPro" id="IPR033135">
    <property type="entry name" value="ClpP_His_AS"/>
</dbReference>
<dbReference type="NCBIfam" id="NF001368">
    <property type="entry name" value="PRK00277.1"/>
    <property type="match status" value="1"/>
</dbReference>
<dbReference type="NCBIfam" id="NF009205">
    <property type="entry name" value="PRK12553.1"/>
    <property type="match status" value="1"/>
</dbReference>
<dbReference type="PANTHER" id="PTHR10381">
    <property type="entry name" value="ATP-DEPENDENT CLP PROTEASE PROTEOLYTIC SUBUNIT"/>
    <property type="match status" value="1"/>
</dbReference>
<dbReference type="PANTHER" id="PTHR10381:SF70">
    <property type="entry name" value="ATP-DEPENDENT CLP PROTEASE PROTEOLYTIC SUBUNIT"/>
    <property type="match status" value="1"/>
</dbReference>
<dbReference type="Pfam" id="PF00574">
    <property type="entry name" value="CLP_protease"/>
    <property type="match status" value="1"/>
</dbReference>
<dbReference type="PRINTS" id="PR00127">
    <property type="entry name" value="CLPPROTEASEP"/>
</dbReference>
<dbReference type="SUPFAM" id="SSF52096">
    <property type="entry name" value="ClpP/crotonase"/>
    <property type="match status" value="1"/>
</dbReference>
<dbReference type="PROSITE" id="PS00382">
    <property type="entry name" value="CLP_PROTEASE_HIS"/>
    <property type="match status" value="1"/>
</dbReference>
<organism>
    <name type="scientific">Shouchella clausii (strain KSM-K16)</name>
    <name type="common">Alkalihalobacillus clausii</name>
    <dbReference type="NCBI Taxonomy" id="66692"/>
    <lineage>
        <taxon>Bacteria</taxon>
        <taxon>Bacillati</taxon>
        <taxon>Bacillota</taxon>
        <taxon>Bacilli</taxon>
        <taxon>Bacillales</taxon>
        <taxon>Bacillaceae</taxon>
        <taxon>Shouchella</taxon>
    </lineage>
</organism>
<name>CLPP1_SHOC1</name>
<accession>Q5WLZ7</accession>
<comment type="function">
    <text evidence="1">Cleaves peptides in various proteins in a process that requires ATP hydrolysis. Has a chymotrypsin-like activity. Plays a major role in the degradation of misfolded proteins.</text>
</comment>
<comment type="catalytic activity">
    <reaction evidence="1">
        <text>Hydrolysis of proteins to small peptides in the presence of ATP and magnesium. alpha-casein is the usual test substrate. In the absence of ATP, only oligopeptides shorter than five residues are hydrolyzed (such as succinyl-Leu-Tyr-|-NHMec, and Leu-Tyr-Leu-|-Tyr-Trp, in which cleavage of the -Tyr-|-Leu- and -Tyr-|-Trp bonds also occurs).</text>
        <dbReference type="EC" id="3.4.21.92"/>
    </reaction>
</comment>
<comment type="subunit">
    <text evidence="1">Fourteen ClpP subunits assemble into 2 heptameric rings which stack back to back to give a disk-like structure with a central cavity, resembling the structure of eukaryotic proteasomes.</text>
</comment>
<comment type="subcellular location">
    <subcellularLocation>
        <location evidence="1">Cytoplasm</location>
    </subcellularLocation>
</comment>
<comment type="similarity">
    <text evidence="1">Belongs to the peptidase S14 family.</text>
</comment>